<protein>
    <recommendedName>
        <fullName>Ribonuclease U2</fullName>
        <shortName>RNase U2</shortName>
        <ecNumber>4.6.1.20</ecNumber>
    </recommendedName>
</protein>
<feature type="chain" id="PRO_0000137379" description="Ribonuclease U2">
    <location>
        <begin position="1"/>
        <end position="114"/>
    </location>
</feature>
<feature type="active site" evidence="4">
    <location>
        <position position="41"/>
    </location>
</feature>
<feature type="active site" description="Proton acceptor" evidence="4">
    <location>
        <position position="62"/>
    </location>
</feature>
<feature type="active site" description="Proton donor" evidence="4">
    <location>
        <position position="101"/>
    </location>
</feature>
<feature type="binding site" evidence="2">
    <location>
        <position position="29"/>
    </location>
    <ligand>
        <name>Ca(2+)</name>
        <dbReference type="ChEBI" id="CHEBI:29108"/>
        <label>1</label>
    </ligand>
</feature>
<feature type="binding site" evidence="2">
    <location>
        <position position="29"/>
    </location>
    <ligand>
        <name>Ca(2+)</name>
        <dbReference type="ChEBI" id="CHEBI:29108"/>
        <label>2</label>
    </ligand>
</feature>
<feature type="binding site" evidence="2">
    <location>
        <position position="30"/>
    </location>
    <ligand>
        <name>Ca(2+)</name>
        <dbReference type="ChEBI" id="CHEBI:29108"/>
        <label>1</label>
    </ligand>
</feature>
<feature type="binding site" evidence="2">
    <location>
        <position position="31"/>
    </location>
    <ligand>
        <name>Ca(2+)</name>
        <dbReference type="ChEBI" id="CHEBI:29108"/>
        <label>2</label>
    </ligand>
</feature>
<feature type="binding site" evidence="2">
    <location>
        <position position="32"/>
    </location>
    <ligand>
        <name>Ca(2+)</name>
        <dbReference type="ChEBI" id="CHEBI:29108"/>
        <label>1</label>
    </ligand>
</feature>
<feature type="binding site" evidence="2">
    <location>
        <position position="32"/>
    </location>
    <ligand>
        <name>Ca(2+)</name>
        <dbReference type="ChEBI" id="CHEBI:29108"/>
        <label>2</label>
    </ligand>
</feature>
<feature type="binding site" evidence="2">
    <location>
        <position position="37"/>
    </location>
    <ligand>
        <name>Ca(2+)</name>
        <dbReference type="ChEBI" id="CHEBI:29108"/>
        <label>1</label>
    </ligand>
</feature>
<feature type="binding site">
    <location>
        <begin position="39"/>
        <end position="49"/>
    </location>
    <ligand>
        <name>substrate</name>
    </ligand>
</feature>
<feature type="binding site" evidence="2">
    <location>
        <position position="39"/>
    </location>
    <ligand>
        <name>Ca(2+)</name>
        <dbReference type="ChEBI" id="CHEBI:29108"/>
        <label>2</label>
    </ligand>
</feature>
<feature type="binding site">
    <location>
        <position position="85"/>
    </location>
    <ligand>
        <name>substrate</name>
    </ligand>
</feature>
<feature type="binding site">
    <location>
        <begin position="108"/>
        <end position="110"/>
    </location>
    <ligand>
        <name>substrate</name>
    </ligand>
</feature>
<feature type="site" description="Methylation inactivates enzyme" evidence="3">
    <location>
        <position position="62"/>
    </location>
</feature>
<feature type="disulfide bond" evidence="1">
    <location>
        <begin position="1"/>
        <end position="54"/>
    </location>
</feature>
<feature type="disulfide bond" evidence="1">
    <location>
        <begin position="9"/>
        <end position="113"/>
    </location>
</feature>
<feature type="disulfide bond" evidence="1">
    <location>
        <begin position="55"/>
        <end position="96"/>
    </location>
</feature>
<feature type="strand" evidence="6">
    <location>
        <begin position="5"/>
        <end position="9"/>
    </location>
</feature>
<feature type="strand" evidence="6">
    <location>
        <begin position="12"/>
        <end position="15"/>
    </location>
</feature>
<feature type="helix" evidence="6">
    <location>
        <begin position="16"/>
        <end position="31"/>
    </location>
</feature>
<feature type="helix" evidence="6">
    <location>
        <begin position="36"/>
        <end position="38"/>
    </location>
</feature>
<feature type="strand" evidence="6">
    <location>
        <begin position="41"/>
        <end position="43"/>
    </location>
</feature>
<feature type="helix" evidence="6">
    <location>
        <begin position="47"/>
        <end position="49"/>
    </location>
</feature>
<feature type="strand" evidence="6">
    <location>
        <begin position="60"/>
        <end position="64"/>
    </location>
</feature>
<feature type="strand" evidence="7">
    <location>
        <begin position="75"/>
        <end position="77"/>
    </location>
</feature>
<feature type="strand" evidence="6">
    <location>
        <begin position="83"/>
        <end position="89"/>
    </location>
</feature>
<feature type="turn" evidence="6">
    <location>
        <begin position="90"/>
        <end position="92"/>
    </location>
</feature>
<feature type="strand" evidence="6">
    <location>
        <begin position="95"/>
        <end position="101"/>
    </location>
</feature>
<feature type="strand" evidence="8">
    <location>
        <begin position="105"/>
        <end position="109"/>
    </location>
</feature>
<accession>P00654</accession>
<accession>Q9HGK7</accession>
<sequence>CDIPQSTNCGGNVYSNDDINTAIQGALDDVANGDRPDNYPHQYYDEASEDITLCCGSGPWSEFPLVYNGPYYSSRDNYVSPGPDRVIYQTNTGEFCATVTHTGAASYDGFTQCS</sequence>
<gene>
    <name type="primary">RNU2</name>
</gene>
<comment type="catalytic activity">
    <reaction>
        <text>[RNA] containing adenosine + H2O = an [RNA fragment]-3'-adenosine-3'-phosphate + a 5'-hydroxy-ribonucleotide-3'-[RNA fragment].</text>
        <dbReference type="EC" id="4.6.1.20"/>
    </reaction>
</comment>
<comment type="catalytic activity">
    <reaction>
        <text>[RNA] containing guanosine + H2O = an [RNA fragment]-3'-guanosine-3'-phosphate + a 5'-hydroxy-ribonucleotide-3'-[RNA fragment].</text>
        <dbReference type="EC" id="4.6.1.20"/>
    </reaction>
</comment>
<comment type="miscellaneous">
    <text>After treatment by base Asn-32 and Asp-45 partially isomerize by succinimide rearrangement to form isoaspartyl peptides.</text>
</comment>
<comment type="similarity">
    <text evidence="5">Belongs to the ribonuclease U2 family.</text>
</comment>
<dbReference type="EC" id="4.6.1.20"/>
<dbReference type="EMBL" id="AJ004827">
    <property type="protein sequence ID" value="CAC04098.1"/>
    <property type="molecule type" value="Genomic_DNA"/>
</dbReference>
<dbReference type="PIR" id="PC4081">
    <property type="entry name" value="NRUSU2"/>
</dbReference>
<dbReference type="PDB" id="1RTU">
    <property type="method" value="X-ray"/>
    <property type="resolution" value="1.80 A"/>
    <property type="chains" value="A=1-114"/>
</dbReference>
<dbReference type="PDB" id="3AGN">
    <property type="method" value="X-ray"/>
    <property type="resolution" value="0.96 A"/>
    <property type="chains" value="A=1-114"/>
</dbReference>
<dbReference type="PDB" id="3AGO">
    <property type="method" value="X-ray"/>
    <property type="resolution" value="0.99 A"/>
    <property type="chains" value="A=1-114"/>
</dbReference>
<dbReference type="PDB" id="3AHS">
    <property type="method" value="X-ray"/>
    <property type="resolution" value="1.32 A"/>
    <property type="chains" value="A/B/C=1-114"/>
</dbReference>
<dbReference type="PDB" id="3AHW">
    <property type="method" value="X-ray"/>
    <property type="resolution" value="1.03 A"/>
    <property type="chains" value="A=1-114"/>
</dbReference>
<dbReference type="PDBsum" id="1RTU"/>
<dbReference type="PDBsum" id="3AGN"/>
<dbReference type="PDBsum" id="3AGO"/>
<dbReference type="PDBsum" id="3AHS"/>
<dbReference type="PDBsum" id="3AHW"/>
<dbReference type="SMR" id="P00654"/>
<dbReference type="KEGG" id="ag:CAC04098"/>
<dbReference type="BRENDA" id="4.6.1.20">
    <property type="organism ID" value="6588"/>
</dbReference>
<dbReference type="EvolutionaryTrace" id="P00654"/>
<dbReference type="PRO" id="PR:P00654"/>
<dbReference type="GO" id="GO:0016829">
    <property type="term" value="F:lyase activity"/>
    <property type="evidence" value="ECO:0007669"/>
    <property type="project" value="UniProtKB-KW"/>
</dbReference>
<dbReference type="GO" id="GO:0046872">
    <property type="term" value="F:metal ion binding"/>
    <property type="evidence" value="ECO:0007669"/>
    <property type="project" value="UniProtKB-KW"/>
</dbReference>
<dbReference type="GO" id="GO:0033899">
    <property type="term" value="F:ribonuclease U2 activity"/>
    <property type="evidence" value="ECO:0007669"/>
    <property type="project" value="UniProtKB-EC"/>
</dbReference>
<dbReference type="GO" id="GO:0003723">
    <property type="term" value="F:RNA binding"/>
    <property type="evidence" value="ECO:0007669"/>
    <property type="project" value="InterPro"/>
</dbReference>
<dbReference type="CDD" id="cd00606">
    <property type="entry name" value="fungal_RNase"/>
    <property type="match status" value="1"/>
</dbReference>
<dbReference type="Gene3D" id="3.10.450.30">
    <property type="entry name" value="Microbial ribonucleases"/>
    <property type="match status" value="1"/>
</dbReference>
<dbReference type="InterPro" id="IPR000026">
    <property type="entry name" value="N1-like"/>
</dbReference>
<dbReference type="InterPro" id="IPR016191">
    <property type="entry name" value="Ribonuclease/ribotoxin"/>
</dbReference>
<dbReference type="InterPro" id="IPR051386">
    <property type="entry name" value="Ribonuclease_N1/T1"/>
</dbReference>
<dbReference type="PANTHER" id="PTHR42104">
    <property type="entry name" value="EXTRACELLULAR GUANYL-SPECIFIC RIBONUCLEASE RNTA (AFU_ORTHOLOGUE AFUA_4G03230)"/>
    <property type="match status" value="1"/>
</dbReference>
<dbReference type="PANTHER" id="PTHR42104:SF1">
    <property type="entry name" value="EXTRACELLULAR GUANYL-SPECIFIC RIBONUCLEASE RNTA (AFU_ORTHOLOGUE AFUA_4G03230)"/>
    <property type="match status" value="1"/>
</dbReference>
<dbReference type="Pfam" id="PF00545">
    <property type="entry name" value="Ribonuclease"/>
    <property type="match status" value="1"/>
</dbReference>
<dbReference type="SUPFAM" id="SSF53933">
    <property type="entry name" value="Microbial ribonucleases"/>
    <property type="match status" value="1"/>
</dbReference>
<reference key="1">
    <citation type="journal article" date="1975" name="Biochem. J.">
        <title>The amino acid sequence of ribonuclease U2 from Ustilago sphaerogena.</title>
        <authorList>
            <person name="Sato S."/>
            <person name="Uchida T."/>
        </authorList>
    </citation>
    <scope>PROTEIN SEQUENCE</scope>
</reference>
<reference key="2">
    <citation type="journal article" date="2000" name="FEMS Microbiol. Lett.">
        <title>Ribonuclease U2: cloning, production in Pichia pastoris and affinity chromatography purification of the active recombinant protein.</title>
        <authorList>
            <person name="Martinez-Ruiz A."/>
            <person name="Garcia-Ortega L."/>
            <person name="Kao R."/>
            <person name="Onaderra M."/>
            <person name="Mancheno J.M."/>
            <person name="Davies J."/>
            <person name="Martinez del Pozo A."/>
            <person name="Gavilanes J.G."/>
        </authorList>
    </citation>
    <scope>NUCLEOTIDE SEQUENCE [GENOMIC DNA] OF 15-106</scope>
    <source>
        <strain>ATCC 12421 / CBS 534.71 / IMI 61828 / 50-135</strain>
    </source>
</reference>
<reference key="3">
    <citation type="journal article" date="1995" name="J. Biochem.">
        <title>Revised sequence of ribonuclease U2 in the substrate-binding region.</title>
        <authorList>
            <person name="Kanaya S."/>
            <person name="Uchida T."/>
        </authorList>
    </citation>
    <scope>PROTEIN SEQUENCE OF 44-53</scope>
    <scope>SEQUENCE REVISION</scope>
</reference>
<reference key="4">
    <citation type="journal article" date="1975" name="J. Biochem.">
        <title>The disulfide bridges of ribonuclease U2 from Ustilago sphaerogena.</title>
        <authorList>
            <person name="Sato S."/>
            <person name="Uchida T."/>
        </authorList>
    </citation>
    <scope>DISULFIDE BONDS</scope>
</reference>
<reference key="5">
    <citation type="book" date="1973" name="Ribosomes and RNA metabolism">
        <editorList>
            <person name="Zelinka J."/>
            <person name="Balan J."/>
        </editorList>
        <authorList>
            <person name="Uchida T."/>
            <person name="Sato S."/>
        </authorList>
    </citation>
    <scope>ACTIVE SITE</scope>
</reference>
<reference key="6">
    <citation type="journal article" date="1995" name="Biochemistry">
        <title>Crystal structure of Ustilago sphaerogena ribonuclease U2 at 1.8-A resolution.</title>
        <authorList>
            <person name="Noguchi S."/>
            <person name="Satow Y."/>
            <person name="Uchida T."/>
            <person name="Sasaki C."/>
            <person name="Matsuzaki T."/>
        </authorList>
    </citation>
    <scope>X-RAY CRYSTALLOGRAPHY (1.8 ANGSTROMS)</scope>
    <scope>SEQUENCE REVISION</scope>
</reference>
<reference key="7">
    <citation type="journal article" date="2010" name="Acta Crystallogr. D">
        <title>Isomerization mechanism of aspartate to isoaspartate implied by structures of Ustilago sphaerogena ribonuclease U2 complexed with adenosine 3'-monophosphate.</title>
        <authorList>
            <person name="Noguchi S."/>
        </authorList>
    </citation>
    <scope>X-RAY CRYSTALLOGRAPHY (0.96 ANGSTROMS) IN COMPLEX WITH CALCIUM IONS AND ADENOSINE 3'-MONOPHOSPHATE</scope>
    <scope>FORMATION OF ISOASPARTATE</scope>
    <scope>DISULFIDE BONDS</scope>
</reference>
<reference key="8">
    <citation type="journal article" date="2010" name="Biopolymers">
        <title>Structural changes induced by the deamidation and isomerization of asparagine revealed by the crystal structure of Ustilago sphaerogena ribonuclease U2B.</title>
        <authorList>
            <person name="Noguchi S."/>
        </authorList>
    </citation>
    <scope>X-RAY CRYSTALLOGRAPHY (1.32 ANGSTROMS)</scope>
</reference>
<reference key="9">
    <citation type="journal article" date="2010" name="Protein Pept. Lett.">
        <title>Conformational variation revealed by the crystal structure of RNase U2A complexed with Ca ion and 2'-adenylic acid at 1.03 A resolution.</title>
        <authorList>
            <person name="Noguchi S."/>
        </authorList>
    </citation>
    <scope>X-RAY CRYSTALLOGRAPHY (1.03 ANGSTROMS) IN COMPLEX WITH CALCIUM AND ADENOSINE 2'-PHOSPHATE</scope>
</reference>
<evidence type="ECO:0000269" key="1">
    <source>
    </source>
</evidence>
<evidence type="ECO:0000269" key="2">
    <source>
    </source>
</evidence>
<evidence type="ECO:0000269" key="3">
    <source>
    </source>
</evidence>
<evidence type="ECO:0000269" key="4">
    <source ref="5"/>
</evidence>
<evidence type="ECO:0000305" key="5"/>
<evidence type="ECO:0007829" key="6">
    <source>
        <dbReference type="PDB" id="3AGN"/>
    </source>
</evidence>
<evidence type="ECO:0007829" key="7">
    <source>
        <dbReference type="PDB" id="3AHS"/>
    </source>
</evidence>
<evidence type="ECO:0007829" key="8">
    <source>
        <dbReference type="PDB" id="3AHW"/>
    </source>
</evidence>
<organism>
    <name type="scientific">Ustilago sphaerogena</name>
    <name type="common">Smut fungus</name>
    <dbReference type="NCBI Taxonomy" id="5271"/>
    <lineage>
        <taxon>Eukaryota</taxon>
        <taxon>Fungi</taxon>
        <taxon>Dikarya</taxon>
        <taxon>Basidiomycota</taxon>
        <taxon>Ustilaginomycotina</taxon>
        <taxon>Ustilaginomycetes</taxon>
        <taxon>Ustilaginales</taxon>
        <taxon>Ustilaginaceae</taxon>
        <taxon>Ustilago</taxon>
    </lineage>
</organism>
<keyword id="KW-0002">3D-structure</keyword>
<keyword id="KW-0106">Calcium</keyword>
<keyword id="KW-0903">Direct protein sequencing</keyword>
<keyword id="KW-1015">Disulfide bond</keyword>
<keyword id="KW-0255">Endonuclease</keyword>
<keyword id="KW-0378">Hydrolase</keyword>
<keyword id="KW-0456">Lyase</keyword>
<keyword id="KW-0479">Metal-binding</keyword>
<keyword id="KW-0540">Nuclease</keyword>
<name>RNU2_USTSP</name>
<proteinExistence type="evidence at protein level"/>